<evidence type="ECO:0000255" key="1">
    <source>
        <dbReference type="HAMAP-Rule" id="MF_00766"/>
    </source>
</evidence>
<feature type="chain" id="PRO_0000257698" description="Biosynthetic peptidoglycan transglycosylase">
    <location>
        <begin position="1"/>
        <end position="245"/>
    </location>
</feature>
<feature type="transmembrane region" description="Helical" evidence="1">
    <location>
        <begin position="19"/>
        <end position="41"/>
    </location>
</feature>
<protein>
    <recommendedName>
        <fullName evidence="1">Biosynthetic peptidoglycan transglycosylase</fullName>
        <ecNumber evidence="1">2.4.99.28</ecNumber>
    </recommendedName>
    <alternativeName>
        <fullName evidence="1">Glycan polymerase</fullName>
    </alternativeName>
    <alternativeName>
        <fullName evidence="1">Peptidoglycan glycosyltransferase MtgA</fullName>
        <shortName evidence="1">PGT</shortName>
    </alternativeName>
</protein>
<organism>
    <name type="scientific">Xanthomonas oryzae pv. oryzae (strain KACC10331 / KXO85)</name>
    <dbReference type="NCBI Taxonomy" id="291331"/>
    <lineage>
        <taxon>Bacteria</taxon>
        <taxon>Pseudomonadati</taxon>
        <taxon>Pseudomonadota</taxon>
        <taxon>Gammaproteobacteria</taxon>
        <taxon>Lysobacterales</taxon>
        <taxon>Lysobacteraceae</taxon>
        <taxon>Xanthomonas</taxon>
    </lineage>
</organism>
<comment type="function">
    <text evidence="1">Peptidoglycan polymerase that catalyzes glycan chain elongation from lipid-linked precursors.</text>
</comment>
<comment type="catalytic activity">
    <reaction evidence="1">
        <text>[GlcNAc-(1-&gt;4)-Mur2Ac(oyl-L-Ala-gamma-D-Glu-L-Lys-D-Ala-D-Ala)](n)-di-trans,octa-cis-undecaprenyl diphosphate + beta-D-GlcNAc-(1-&gt;4)-Mur2Ac(oyl-L-Ala-gamma-D-Glu-L-Lys-D-Ala-D-Ala)-di-trans,octa-cis-undecaprenyl diphosphate = [GlcNAc-(1-&gt;4)-Mur2Ac(oyl-L-Ala-gamma-D-Glu-L-Lys-D-Ala-D-Ala)](n+1)-di-trans,octa-cis-undecaprenyl diphosphate + di-trans,octa-cis-undecaprenyl diphosphate + H(+)</text>
        <dbReference type="Rhea" id="RHEA:23708"/>
        <dbReference type="Rhea" id="RHEA-COMP:9602"/>
        <dbReference type="Rhea" id="RHEA-COMP:9603"/>
        <dbReference type="ChEBI" id="CHEBI:15378"/>
        <dbReference type="ChEBI" id="CHEBI:58405"/>
        <dbReference type="ChEBI" id="CHEBI:60033"/>
        <dbReference type="ChEBI" id="CHEBI:78435"/>
        <dbReference type="EC" id="2.4.99.28"/>
    </reaction>
</comment>
<comment type="pathway">
    <text evidence="1">Cell wall biogenesis; peptidoglycan biosynthesis.</text>
</comment>
<comment type="subcellular location">
    <subcellularLocation>
        <location evidence="1">Cell inner membrane</location>
        <topology evidence="1">Single-pass membrane protein</topology>
    </subcellularLocation>
</comment>
<comment type="similarity">
    <text evidence="1">Belongs to the glycosyltransferase 51 family.</text>
</comment>
<name>MTGA_XANOR</name>
<reference key="1">
    <citation type="journal article" date="2005" name="Nucleic Acids Res.">
        <title>The genome sequence of Xanthomonas oryzae pathovar oryzae KACC10331, the bacterial blight pathogen of rice.</title>
        <authorList>
            <person name="Lee B.-M."/>
            <person name="Park Y.-J."/>
            <person name="Park D.-S."/>
            <person name="Kang H.-W."/>
            <person name="Kim J.-G."/>
            <person name="Song E.-S."/>
            <person name="Park I.-C."/>
            <person name="Yoon U.-H."/>
            <person name="Hahn J.-H."/>
            <person name="Koo B.-S."/>
            <person name="Lee G.-B."/>
            <person name="Kim H."/>
            <person name="Park H.-S."/>
            <person name="Yoon K.-O."/>
            <person name="Kim J.-H."/>
            <person name="Jung C.-H."/>
            <person name="Koh N.-H."/>
            <person name="Seo J.-S."/>
            <person name="Go S.-J."/>
        </authorList>
    </citation>
    <scope>NUCLEOTIDE SEQUENCE [LARGE SCALE GENOMIC DNA]</scope>
    <source>
        <strain>KACC10331 / KXO85</strain>
    </source>
</reference>
<proteinExistence type="inferred from homology"/>
<dbReference type="EC" id="2.4.99.28" evidence="1"/>
<dbReference type="EMBL" id="AE013598">
    <property type="protein sequence ID" value="ABJ89927.1"/>
    <property type="molecule type" value="Genomic_DNA"/>
</dbReference>
<dbReference type="SMR" id="Q5H1V9"/>
<dbReference type="STRING" id="291331.XOO4787"/>
<dbReference type="CAZy" id="GT51">
    <property type="family name" value="Glycosyltransferase Family 51"/>
</dbReference>
<dbReference type="KEGG" id="xoo:XOO4787"/>
<dbReference type="HOGENOM" id="CLU_006354_1_1_6"/>
<dbReference type="UniPathway" id="UPA00219"/>
<dbReference type="Proteomes" id="UP000006735">
    <property type="component" value="Chromosome"/>
</dbReference>
<dbReference type="GO" id="GO:0009274">
    <property type="term" value="C:peptidoglycan-based cell wall"/>
    <property type="evidence" value="ECO:0007669"/>
    <property type="project" value="InterPro"/>
</dbReference>
<dbReference type="GO" id="GO:0005886">
    <property type="term" value="C:plasma membrane"/>
    <property type="evidence" value="ECO:0007669"/>
    <property type="project" value="UniProtKB-SubCell"/>
</dbReference>
<dbReference type="GO" id="GO:0016763">
    <property type="term" value="F:pentosyltransferase activity"/>
    <property type="evidence" value="ECO:0007669"/>
    <property type="project" value="InterPro"/>
</dbReference>
<dbReference type="GO" id="GO:0008955">
    <property type="term" value="F:peptidoglycan glycosyltransferase activity"/>
    <property type="evidence" value="ECO:0007669"/>
    <property type="project" value="UniProtKB-UniRule"/>
</dbReference>
<dbReference type="GO" id="GO:0071555">
    <property type="term" value="P:cell wall organization"/>
    <property type="evidence" value="ECO:0007669"/>
    <property type="project" value="UniProtKB-KW"/>
</dbReference>
<dbReference type="GO" id="GO:0009252">
    <property type="term" value="P:peptidoglycan biosynthetic process"/>
    <property type="evidence" value="ECO:0007669"/>
    <property type="project" value="UniProtKB-UniRule"/>
</dbReference>
<dbReference type="GO" id="GO:0008360">
    <property type="term" value="P:regulation of cell shape"/>
    <property type="evidence" value="ECO:0007669"/>
    <property type="project" value="UniProtKB-KW"/>
</dbReference>
<dbReference type="Gene3D" id="1.10.3810.10">
    <property type="entry name" value="Biosynthetic peptidoglycan transglycosylase-like"/>
    <property type="match status" value="1"/>
</dbReference>
<dbReference type="HAMAP" id="MF_00766">
    <property type="entry name" value="PGT_MtgA"/>
    <property type="match status" value="1"/>
</dbReference>
<dbReference type="InterPro" id="IPR001264">
    <property type="entry name" value="Glyco_trans_51"/>
</dbReference>
<dbReference type="InterPro" id="IPR023346">
    <property type="entry name" value="Lysozyme-like_dom_sf"/>
</dbReference>
<dbReference type="InterPro" id="IPR036950">
    <property type="entry name" value="PBP_transglycosylase"/>
</dbReference>
<dbReference type="InterPro" id="IPR011812">
    <property type="entry name" value="Pep_trsgly"/>
</dbReference>
<dbReference type="NCBIfam" id="TIGR02070">
    <property type="entry name" value="mono_pep_trsgly"/>
    <property type="match status" value="1"/>
</dbReference>
<dbReference type="PANTHER" id="PTHR30400:SF0">
    <property type="entry name" value="BIOSYNTHETIC PEPTIDOGLYCAN TRANSGLYCOSYLASE"/>
    <property type="match status" value="1"/>
</dbReference>
<dbReference type="PANTHER" id="PTHR30400">
    <property type="entry name" value="MONOFUNCTIONAL BIOSYNTHETIC PEPTIDOGLYCAN TRANSGLYCOSYLASE"/>
    <property type="match status" value="1"/>
</dbReference>
<dbReference type="Pfam" id="PF00912">
    <property type="entry name" value="Transgly"/>
    <property type="match status" value="1"/>
</dbReference>
<dbReference type="SUPFAM" id="SSF53955">
    <property type="entry name" value="Lysozyme-like"/>
    <property type="match status" value="1"/>
</dbReference>
<gene>
    <name evidence="1" type="primary">mtgA</name>
    <name type="ordered locus">XOO4787</name>
</gene>
<keyword id="KW-0997">Cell inner membrane</keyword>
<keyword id="KW-1003">Cell membrane</keyword>
<keyword id="KW-0133">Cell shape</keyword>
<keyword id="KW-0961">Cell wall biogenesis/degradation</keyword>
<keyword id="KW-0328">Glycosyltransferase</keyword>
<keyword id="KW-0472">Membrane</keyword>
<keyword id="KW-0573">Peptidoglycan synthesis</keyword>
<keyword id="KW-1185">Reference proteome</keyword>
<keyword id="KW-0808">Transferase</keyword>
<keyword id="KW-0812">Transmembrane</keyword>
<keyword id="KW-1133">Transmembrane helix</keyword>
<accession>Q5H1V9</accession>
<accession>Q05HN6</accession>
<sequence>MGTDVWDDKQAAPPRRRRCLRWVLAAPLLFAAASVLQVLFLRVVDPPISSMMVGRYLEAWGEGDWSFSLHQRWRDYDKIAASLPISVVAAEDQQFPMHHGFDLQAIEKARDHNARGGRVRGASTISQQVAKNVFLWQGRSWVRKGLEAWYTVLIELFWPKQRILEMYLNVAEFGDGVYGAQAAAQQFWGKDAAGLSPTESARLAAVLPSPRHYDARSPGAFVQRRTMWIQRQARQLGGPAYLPAP</sequence>